<accession>A7EI93</accession>
<sequence>MGSSARKKKEKKKDFQKTKLRVGKTKAKADNFTDTSFKSKSIVVNQQSLTTSAPSNVVQFTHYLSLASSSKSDTQRKDALSFLTTQLSSQPVNEAIPLPTAVILPKLLPLILDGNASVRSQLLKFLRLLPPADIGDRVESALLYTRAGMTHLATEIRVDALAVLEWLLQVAGDDVVSCPGGWVKTLKSFMSMIGWTTSSATSKWSSASRVSFGISRASFEKSGKTLPRQLLVLSQFLKAGLVEPDTAAQPTTSDNHFPLFDVERHMIPSRANAYAHLNLFGSSRDEEGEMYIDREDRQRVFHKRFQADVVTGVEHAKREAGEAGRAAAVLTKVLRDGMNDYSGVDDTQ</sequence>
<protein>
    <recommendedName>
        <fullName>Pre-rRNA-processing protein ipi1</fullName>
    </recommendedName>
</protein>
<feature type="chain" id="PRO_0000308730" description="Pre-rRNA-processing protein ipi1">
    <location>
        <begin position="1"/>
        <end position="348"/>
    </location>
</feature>
<feature type="region of interest" description="Disordered" evidence="2">
    <location>
        <begin position="1"/>
        <end position="22"/>
    </location>
</feature>
<feature type="compositionally biased region" description="Basic residues" evidence="2">
    <location>
        <begin position="1"/>
        <end position="11"/>
    </location>
</feature>
<dbReference type="EMBL" id="CH476626">
    <property type="protein sequence ID" value="EDO02559.1"/>
    <property type="molecule type" value="Genomic_DNA"/>
</dbReference>
<dbReference type="RefSeq" id="XP_001593608.1">
    <property type="nucleotide sequence ID" value="XM_001593558.1"/>
</dbReference>
<dbReference type="SMR" id="A7EI93"/>
<dbReference type="FunCoup" id="A7EI93">
    <property type="interactions" value="210"/>
</dbReference>
<dbReference type="STRING" id="665079.A7EI93"/>
<dbReference type="EnsemblFungi" id="EDO02559">
    <property type="protein sequence ID" value="EDO02559"/>
    <property type="gene ID" value="SS1G_05035"/>
</dbReference>
<dbReference type="GeneID" id="5490273"/>
<dbReference type="KEGG" id="ssl:SS1G_05035"/>
<dbReference type="VEuPathDB" id="FungiDB:sscle_08g063610"/>
<dbReference type="eggNOG" id="KOG2149">
    <property type="taxonomic scope" value="Eukaryota"/>
</dbReference>
<dbReference type="HOGENOM" id="CLU_050252_2_0_1"/>
<dbReference type="InParanoid" id="A7EI93"/>
<dbReference type="OMA" id="CAGGWVK"/>
<dbReference type="OrthoDB" id="361362at2759"/>
<dbReference type="Proteomes" id="UP000001312">
    <property type="component" value="Unassembled WGS sequence"/>
</dbReference>
<dbReference type="GO" id="GO:0005634">
    <property type="term" value="C:nucleus"/>
    <property type="evidence" value="ECO:0000318"/>
    <property type="project" value="GO_Central"/>
</dbReference>
<dbReference type="GO" id="GO:0120330">
    <property type="term" value="C:rixosome complex"/>
    <property type="evidence" value="ECO:0000318"/>
    <property type="project" value="GO_Central"/>
</dbReference>
<dbReference type="GO" id="GO:0006364">
    <property type="term" value="P:rRNA processing"/>
    <property type="evidence" value="ECO:0000318"/>
    <property type="project" value="GO_Central"/>
</dbReference>
<dbReference type="InterPro" id="IPR016024">
    <property type="entry name" value="ARM-type_fold"/>
</dbReference>
<dbReference type="InterPro" id="IPR024679">
    <property type="entry name" value="Ipi1_N"/>
</dbReference>
<dbReference type="PANTHER" id="PTHR16056">
    <property type="entry name" value="REGULATOR OF MICROTUBULE DYNAMICS PROTEIN"/>
    <property type="match status" value="1"/>
</dbReference>
<dbReference type="PANTHER" id="PTHR16056:SF2">
    <property type="entry name" value="TESTIS-EXPRESSED PROTEIN 10"/>
    <property type="match status" value="1"/>
</dbReference>
<dbReference type="Pfam" id="PF12333">
    <property type="entry name" value="Ipi1_N"/>
    <property type="match status" value="1"/>
</dbReference>
<dbReference type="SUPFAM" id="SSF48371">
    <property type="entry name" value="ARM repeat"/>
    <property type="match status" value="1"/>
</dbReference>
<reference key="1">
    <citation type="journal article" date="2011" name="PLoS Genet.">
        <title>Genomic analysis of the necrotrophic fungal pathogens Sclerotinia sclerotiorum and Botrytis cinerea.</title>
        <authorList>
            <person name="Amselem J."/>
            <person name="Cuomo C.A."/>
            <person name="van Kan J.A.L."/>
            <person name="Viaud M."/>
            <person name="Benito E.P."/>
            <person name="Couloux A."/>
            <person name="Coutinho P.M."/>
            <person name="de Vries R.P."/>
            <person name="Dyer P.S."/>
            <person name="Fillinger S."/>
            <person name="Fournier E."/>
            <person name="Gout L."/>
            <person name="Hahn M."/>
            <person name="Kohn L."/>
            <person name="Lapalu N."/>
            <person name="Plummer K.M."/>
            <person name="Pradier J.-M."/>
            <person name="Quevillon E."/>
            <person name="Sharon A."/>
            <person name="Simon A."/>
            <person name="ten Have A."/>
            <person name="Tudzynski B."/>
            <person name="Tudzynski P."/>
            <person name="Wincker P."/>
            <person name="Andrew M."/>
            <person name="Anthouard V."/>
            <person name="Beever R.E."/>
            <person name="Beffa R."/>
            <person name="Benoit I."/>
            <person name="Bouzid O."/>
            <person name="Brault B."/>
            <person name="Chen Z."/>
            <person name="Choquer M."/>
            <person name="Collemare J."/>
            <person name="Cotton P."/>
            <person name="Danchin E.G."/>
            <person name="Da Silva C."/>
            <person name="Gautier A."/>
            <person name="Giraud C."/>
            <person name="Giraud T."/>
            <person name="Gonzalez C."/>
            <person name="Grossetete S."/>
            <person name="Gueldener U."/>
            <person name="Henrissat B."/>
            <person name="Howlett B.J."/>
            <person name="Kodira C."/>
            <person name="Kretschmer M."/>
            <person name="Lappartient A."/>
            <person name="Leroch M."/>
            <person name="Levis C."/>
            <person name="Mauceli E."/>
            <person name="Neuveglise C."/>
            <person name="Oeser B."/>
            <person name="Pearson M."/>
            <person name="Poulain J."/>
            <person name="Poussereau N."/>
            <person name="Quesneville H."/>
            <person name="Rascle C."/>
            <person name="Schumacher J."/>
            <person name="Segurens B."/>
            <person name="Sexton A."/>
            <person name="Silva E."/>
            <person name="Sirven C."/>
            <person name="Soanes D.M."/>
            <person name="Talbot N.J."/>
            <person name="Templeton M."/>
            <person name="Yandava C."/>
            <person name="Yarden O."/>
            <person name="Zeng Q."/>
            <person name="Rollins J.A."/>
            <person name="Lebrun M.-H."/>
            <person name="Dickman M."/>
        </authorList>
    </citation>
    <scope>NUCLEOTIDE SEQUENCE [LARGE SCALE GENOMIC DNA]</scope>
    <source>
        <strain>ATCC 18683 / 1980 / Ss-1</strain>
    </source>
</reference>
<organism>
    <name type="scientific">Sclerotinia sclerotiorum (strain ATCC 18683 / 1980 / Ss-1)</name>
    <name type="common">White mold</name>
    <name type="synonym">Whetzelinia sclerotiorum</name>
    <dbReference type="NCBI Taxonomy" id="665079"/>
    <lineage>
        <taxon>Eukaryota</taxon>
        <taxon>Fungi</taxon>
        <taxon>Dikarya</taxon>
        <taxon>Ascomycota</taxon>
        <taxon>Pezizomycotina</taxon>
        <taxon>Leotiomycetes</taxon>
        <taxon>Helotiales</taxon>
        <taxon>Sclerotiniaceae</taxon>
        <taxon>Sclerotinia</taxon>
    </lineage>
</organism>
<proteinExistence type="inferred from homology"/>
<gene>
    <name type="primary">ipi1</name>
    <name type="ORF">SS1G_05035</name>
</gene>
<comment type="function">
    <text evidence="1">Component of the RIX1 complex required for processing of ITS2 sequences from 35S pre-rRNA.</text>
</comment>
<comment type="subunit">
    <text evidence="1">Component of the RIX1 complex, composed of ipi1, rix1/ipi2 and ipi3 in a 1:2:2 stoichiometry. The complex interacts (via rix1) with mdn1 (via its hexameric AAA ATPase ring) and the pre-60S ribosome particles.</text>
</comment>
<comment type="subcellular location">
    <subcellularLocation>
        <location evidence="1">Nucleus</location>
    </subcellularLocation>
</comment>
<comment type="similarity">
    <text evidence="3">Belongs to the IPI1/TEX10 family.</text>
</comment>
<keyword id="KW-0539">Nucleus</keyword>
<keyword id="KW-1185">Reference proteome</keyword>
<keyword id="KW-0690">Ribosome biogenesis</keyword>
<keyword id="KW-0698">rRNA processing</keyword>
<evidence type="ECO:0000250" key="1">
    <source>
        <dbReference type="UniProtKB" id="P38803"/>
    </source>
</evidence>
<evidence type="ECO:0000256" key="2">
    <source>
        <dbReference type="SAM" id="MobiDB-lite"/>
    </source>
</evidence>
<evidence type="ECO:0000305" key="3"/>
<name>IPI1_SCLS1</name>